<reference key="1">
    <citation type="journal article" date="2004" name="Nucleic Acids Res.">
        <title>Thermoadaptation trait revealed by the genome sequence of thermophilic Geobacillus kaustophilus.</title>
        <authorList>
            <person name="Takami H."/>
            <person name="Takaki Y."/>
            <person name="Chee G.-J."/>
            <person name="Nishi S."/>
            <person name="Shimamura S."/>
            <person name="Suzuki H."/>
            <person name="Matsui S."/>
            <person name="Uchiyama I."/>
        </authorList>
    </citation>
    <scope>NUCLEOTIDE SEQUENCE [LARGE SCALE GENOMIC DNA]</scope>
    <source>
        <strain>HTA426</strain>
    </source>
</reference>
<protein>
    <recommendedName>
        <fullName evidence="1">NADH-quinone oxidoreductase subunit N</fullName>
        <ecNumber evidence="1">7.1.1.-</ecNumber>
    </recommendedName>
    <alternativeName>
        <fullName evidence="1">NADH dehydrogenase I subunit N</fullName>
    </alternativeName>
    <alternativeName>
        <fullName evidence="1">NDH-1 subunit N</fullName>
    </alternativeName>
</protein>
<organism>
    <name type="scientific">Geobacillus kaustophilus (strain HTA426)</name>
    <dbReference type="NCBI Taxonomy" id="235909"/>
    <lineage>
        <taxon>Bacteria</taxon>
        <taxon>Bacillati</taxon>
        <taxon>Bacillota</taxon>
        <taxon>Bacilli</taxon>
        <taxon>Bacillales</taxon>
        <taxon>Anoxybacillaceae</taxon>
        <taxon>Geobacillus</taxon>
        <taxon>Geobacillus thermoleovorans group</taxon>
    </lineage>
</organism>
<dbReference type="EC" id="7.1.1.-" evidence="1"/>
<dbReference type="EMBL" id="BA000043">
    <property type="protein sequence ID" value="BAD77630.1"/>
    <property type="molecule type" value="Genomic_DNA"/>
</dbReference>
<dbReference type="RefSeq" id="WP_011232812.1">
    <property type="nucleotide sequence ID" value="NC_006510.1"/>
</dbReference>
<dbReference type="SMR" id="Q5KUK6"/>
<dbReference type="STRING" id="235909.GK3345"/>
<dbReference type="KEGG" id="gka:GK3345"/>
<dbReference type="PATRIC" id="fig|235909.7.peg.3568"/>
<dbReference type="eggNOG" id="COG1007">
    <property type="taxonomic scope" value="Bacteria"/>
</dbReference>
<dbReference type="HOGENOM" id="CLU_007100_1_1_9"/>
<dbReference type="Proteomes" id="UP000001172">
    <property type="component" value="Chromosome"/>
</dbReference>
<dbReference type="GO" id="GO:0005886">
    <property type="term" value="C:plasma membrane"/>
    <property type="evidence" value="ECO:0007669"/>
    <property type="project" value="UniProtKB-SubCell"/>
</dbReference>
<dbReference type="GO" id="GO:0008137">
    <property type="term" value="F:NADH dehydrogenase (ubiquinone) activity"/>
    <property type="evidence" value="ECO:0007669"/>
    <property type="project" value="InterPro"/>
</dbReference>
<dbReference type="GO" id="GO:0050136">
    <property type="term" value="F:NADH:ubiquinone reductase (non-electrogenic) activity"/>
    <property type="evidence" value="ECO:0007669"/>
    <property type="project" value="UniProtKB-UniRule"/>
</dbReference>
<dbReference type="GO" id="GO:0048038">
    <property type="term" value="F:quinone binding"/>
    <property type="evidence" value="ECO:0007669"/>
    <property type="project" value="UniProtKB-KW"/>
</dbReference>
<dbReference type="GO" id="GO:0042773">
    <property type="term" value="P:ATP synthesis coupled electron transport"/>
    <property type="evidence" value="ECO:0007669"/>
    <property type="project" value="InterPro"/>
</dbReference>
<dbReference type="HAMAP" id="MF_00445">
    <property type="entry name" value="NDH1_NuoN_1"/>
    <property type="match status" value="1"/>
</dbReference>
<dbReference type="InterPro" id="IPR010096">
    <property type="entry name" value="NADH-Q_OxRdtase_suN/2"/>
</dbReference>
<dbReference type="InterPro" id="IPR001750">
    <property type="entry name" value="ND/Mrp_TM"/>
</dbReference>
<dbReference type="NCBIfam" id="TIGR01770">
    <property type="entry name" value="NDH_I_N"/>
    <property type="match status" value="1"/>
</dbReference>
<dbReference type="NCBIfam" id="NF004446">
    <property type="entry name" value="PRK05777.2-4"/>
    <property type="match status" value="1"/>
</dbReference>
<dbReference type="PANTHER" id="PTHR22773">
    <property type="entry name" value="NADH DEHYDROGENASE"/>
    <property type="match status" value="1"/>
</dbReference>
<dbReference type="Pfam" id="PF00361">
    <property type="entry name" value="Proton_antipo_M"/>
    <property type="match status" value="1"/>
</dbReference>
<feature type="chain" id="PRO_0000391150" description="NADH-quinone oxidoreductase subunit N">
    <location>
        <begin position="1"/>
        <end position="497"/>
    </location>
</feature>
<feature type="transmembrane region" description="Helical" evidence="1">
    <location>
        <begin position="12"/>
        <end position="32"/>
    </location>
</feature>
<feature type="transmembrane region" description="Helical" evidence="1">
    <location>
        <begin position="40"/>
        <end position="60"/>
    </location>
</feature>
<feature type="transmembrane region" description="Helical" evidence="1">
    <location>
        <begin position="80"/>
        <end position="100"/>
    </location>
</feature>
<feature type="transmembrane region" description="Helical" evidence="1">
    <location>
        <begin position="116"/>
        <end position="136"/>
    </location>
</feature>
<feature type="transmembrane region" description="Helical" evidence="1">
    <location>
        <begin position="166"/>
        <end position="186"/>
    </location>
</feature>
<feature type="transmembrane region" description="Helical" evidence="1">
    <location>
        <begin position="208"/>
        <end position="228"/>
    </location>
</feature>
<feature type="transmembrane region" description="Helical" evidence="1">
    <location>
        <begin position="240"/>
        <end position="260"/>
    </location>
</feature>
<feature type="transmembrane region" description="Helical" evidence="1">
    <location>
        <begin position="284"/>
        <end position="304"/>
    </location>
</feature>
<feature type="transmembrane region" description="Helical" evidence="1">
    <location>
        <begin position="316"/>
        <end position="336"/>
    </location>
</feature>
<feature type="transmembrane region" description="Helical" evidence="1">
    <location>
        <begin position="341"/>
        <end position="361"/>
    </location>
</feature>
<feature type="transmembrane region" description="Helical" evidence="1">
    <location>
        <begin position="383"/>
        <end position="403"/>
    </location>
</feature>
<feature type="transmembrane region" description="Helical" evidence="1">
    <location>
        <begin position="430"/>
        <end position="450"/>
    </location>
</feature>
<feature type="transmembrane region" description="Helical" evidence="1">
    <location>
        <begin position="457"/>
        <end position="477"/>
    </location>
</feature>
<gene>
    <name evidence="1" type="primary">nuoN</name>
    <name type="ordered locus">GK3345</name>
</gene>
<proteinExistence type="inferred from homology"/>
<keyword id="KW-1003">Cell membrane</keyword>
<keyword id="KW-0472">Membrane</keyword>
<keyword id="KW-0520">NAD</keyword>
<keyword id="KW-0874">Quinone</keyword>
<keyword id="KW-1185">Reference proteome</keyword>
<keyword id="KW-1278">Translocase</keyword>
<keyword id="KW-0812">Transmembrane</keyword>
<keyword id="KW-1133">Transmembrane helix</keyword>
<keyword id="KW-0813">Transport</keyword>
<name>NUON_GEOKA</name>
<accession>Q5KUK6</accession>
<evidence type="ECO:0000255" key="1">
    <source>
        <dbReference type="HAMAP-Rule" id="MF_00445"/>
    </source>
</evidence>
<sequence length="497" mass="52869">MNDVWQSDWSMMAPEWIVLAAAIALLVMDLALPSDRSRRPLAWGAAAAAALAMIATAAMIPAGSASILHDTFRLDAFAKAFKFILLAGGALALLLVAEWAPKEGSPHRGEFVYMMLFALLGAMMMASSGDLLTLFVSLELLSVSSYILAGLRKTAPASNEAALKYVINGGIATAIMLFGMSYVFGLTGTTNLGGIARRLQETNEPYMLALAFLLLLIGVSFKLATVPFHMWAPDVYEGAPVPATAFFAVVSKTAGFALLLRLLVTIFAAAPSEGRDPSSLLLSMQPIITVLAGLTMIIGSVVALRQRSLKRLLAYSGIAHAGYLLAGFAAMSWAMIDSLWMYLLVYTLMNIGAFAIIAHIVNETGSDDLDGLAGLYRHRPFLAAALGLFLLSLAGIPGTAGFIAKLHIFIGLVVTEPGHYVLAAVMAITTVISYVYYFNLIVQLFFRPTFTAPLGRLPAGLSTAVVLCALGTLAIGWAPGLAYDMLAQFGHFGDFLP</sequence>
<comment type="function">
    <text evidence="1">NDH-1 shuttles electrons from NADH, via FMN and iron-sulfur (Fe-S) centers, to quinones in the respiratory chain. The immediate electron acceptor for the enzyme in this species is believed to be a menaquinone. Couples the redox reaction to proton translocation (for every two electrons transferred, four hydrogen ions are translocated across the cytoplasmic membrane), and thus conserves the redox energy in a proton gradient.</text>
</comment>
<comment type="catalytic activity">
    <reaction evidence="1">
        <text>a quinone + NADH + 5 H(+)(in) = a quinol + NAD(+) + 4 H(+)(out)</text>
        <dbReference type="Rhea" id="RHEA:57888"/>
        <dbReference type="ChEBI" id="CHEBI:15378"/>
        <dbReference type="ChEBI" id="CHEBI:24646"/>
        <dbReference type="ChEBI" id="CHEBI:57540"/>
        <dbReference type="ChEBI" id="CHEBI:57945"/>
        <dbReference type="ChEBI" id="CHEBI:132124"/>
    </reaction>
</comment>
<comment type="subunit">
    <text evidence="1">NDH-1 is composed of 14 different subunits. Subunits NuoA, H, J, K, L, M, N constitute the membrane sector of the complex.</text>
</comment>
<comment type="subcellular location">
    <subcellularLocation>
        <location evidence="1">Cell membrane</location>
        <topology evidence="1">Multi-pass membrane protein</topology>
    </subcellularLocation>
</comment>
<comment type="similarity">
    <text evidence="1">Belongs to the complex I subunit 2 family.</text>
</comment>